<organism>
    <name type="scientific">Bacillus subtilis (strain 168)</name>
    <dbReference type="NCBI Taxonomy" id="224308"/>
    <lineage>
        <taxon>Bacteria</taxon>
        <taxon>Bacillati</taxon>
        <taxon>Bacillota</taxon>
        <taxon>Bacilli</taxon>
        <taxon>Bacillales</taxon>
        <taxon>Bacillaceae</taxon>
        <taxon>Bacillus</taxon>
    </lineage>
</organism>
<proteinExistence type="evidence at protein level"/>
<name>PPAC_BACSU</name>
<dbReference type="EC" id="3.6.1.1"/>
<dbReference type="EMBL" id="D26185">
    <property type="protein sequence ID" value="BAA05186.1"/>
    <property type="molecule type" value="Genomic_DNA"/>
</dbReference>
<dbReference type="EMBL" id="AL009126">
    <property type="protein sequence ID" value="CAB16092.1"/>
    <property type="molecule type" value="Genomic_DNA"/>
</dbReference>
<dbReference type="PIR" id="S65980">
    <property type="entry name" value="S65980"/>
</dbReference>
<dbReference type="RefSeq" id="NP_391935.1">
    <property type="nucleotide sequence ID" value="NC_000964.3"/>
</dbReference>
<dbReference type="RefSeq" id="WP_003226902.1">
    <property type="nucleotide sequence ID" value="NZ_OZ025638.1"/>
</dbReference>
<dbReference type="PDB" id="1K23">
    <property type="method" value="X-ray"/>
    <property type="resolution" value="3.00 A"/>
    <property type="chains" value="A/B/C/D=1-309"/>
</dbReference>
<dbReference type="PDB" id="1WPM">
    <property type="method" value="X-ray"/>
    <property type="resolution" value="2.05 A"/>
    <property type="chains" value="A/B=1-309"/>
</dbReference>
<dbReference type="PDB" id="1WPN">
    <property type="method" value="X-ray"/>
    <property type="resolution" value="1.30 A"/>
    <property type="chains" value="A/B=1-188"/>
</dbReference>
<dbReference type="PDB" id="2HAW">
    <property type="method" value="X-ray"/>
    <property type="resolution" value="1.75 A"/>
    <property type="chains" value="A/B=1-309"/>
</dbReference>
<dbReference type="PDB" id="2IW4">
    <property type="method" value="X-ray"/>
    <property type="resolution" value="2.15 A"/>
    <property type="chains" value="A/B=1-309"/>
</dbReference>
<dbReference type="PDBsum" id="1K23"/>
<dbReference type="PDBsum" id="1WPM"/>
<dbReference type="PDBsum" id="1WPN"/>
<dbReference type="PDBsum" id="2HAW"/>
<dbReference type="PDBsum" id="2IW4"/>
<dbReference type="SMR" id="P37487"/>
<dbReference type="FunCoup" id="P37487">
    <property type="interactions" value="74"/>
</dbReference>
<dbReference type="IntAct" id="P37487">
    <property type="interactions" value="1"/>
</dbReference>
<dbReference type="MINT" id="P37487"/>
<dbReference type="STRING" id="224308.BSU40550"/>
<dbReference type="jPOST" id="P37487"/>
<dbReference type="PaxDb" id="224308-BSU40550"/>
<dbReference type="EnsemblBacteria" id="CAB16092">
    <property type="protein sequence ID" value="CAB16092"/>
    <property type="gene ID" value="BSU_40550"/>
</dbReference>
<dbReference type="GeneID" id="937817"/>
<dbReference type="KEGG" id="bsu:BSU40550"/>
<dbReference type="PATRIC" id="fig|224308.179.peg.4391"/>
<dbReference type="eggNOG" id="COG1227">
    <property type="taxonomic scope" value="Bacteria"/>
</dbReference>
<dbReference type="InParanoid" id="P37487"/>
<dbReference type="OrthoDB" id="9766150at2"/>
<dbReference type="PhylomeDB" id="P37487"/>
<dbReference type="BioCyc" id="BSUB:BSU40550-MONOMER"/>
<dbReference type="BRENDA" id="3.6.1.1">
    <property type="organism ID" value="658"/>
</dbReference>
<dbReference type="EvolutionaryTrace" id="P37487"/>
<dbReference type="PRO" id="PR:P37487"/>
<dbReference type="Proteomes" id="UP000001570">
    <property type="component" value="Chromosome"/>
</dbReference>
<dbReference type="GO" id="GO:0005737">
    <property type="term" value="C:cytoplasm"/>
    <property type="evidence" value="ECO:0000318"/>
    <property type="project" value="GO_Central"/>
</dbReference>
<dbReference type="GO" id="GO:0004427">
    <property type="term" value="F:inorganic diphosphate phosphatase activity"/>
    <property type="evidence" value="ECO:0007669"/>
    <property type="project" value="UniProtKB-UniRule"/>
</dbReference>
<dbReference type="GO" id="GO:0030145">
    <property type="term" value="F:manganese ion binding"/>
    <property type="evidence" value="ECO:0007669"/>
    <property type="project" value="UniProtKB-UniRule"/>
</dbReference>
<dbReference type="FunFam" id="3.10.310.20:FF:000001">
    <property type="entry name" value="Probable manganese-dependent inorganic pyrophosphatase"/>
    <property type="match status" value="1"/>
</dbReference>
<dbReference type="FunFam" id="3.90.1640.10:FF:000001">
    <property type="entry name" value="Probable manganese-dependent inorganic pyrophosphatase"/>
    <property type="match status" value="1"/>
</dbReference>
<dbReference type="Gene3D" id="3.10.310.20">
    <property type="entry name" value="DHHA2 domain"/>
    <property type="match status" value="1"/>
</dbReference>
<dbReference type="Gene3D" id="3.90.1640.10">
    <property type="entry name" value="inorganic pyrophosphatase (n-terminal core)"/>
    <property type="match status" value="1"/>
</dbReference>
<dbReference type="HAMAP" id="MF_00207">
    <property type="entry name" value="PPase_C"/>
    <property type="match status" value="1"/>
</dbReference>
<dbReference type="InterPro" id="IPR001667">
    <property type="entry name" value="DDH_dom"/>
</dbReference>
<dbReference type="InterPro" id="IPR038763">
    <property type="entry name" value="DHH_sf"/>
</dbReference>
<dbReference type="InterPro" id="IPR004097">
    <property type="entry name" value="DHHA2"/>
</dbReference>
<dbReference type="InterPro" id="IPR038222">
    <property type="entry name" value="DHHA2_dom_sf"/>
</dbReference>
<dbReference type="InterPro" id="IPR022934">
    <property type="entry name" value="Mn-dep_inorganic_PyrPase"/>
</dbReference>
<dbReference type="NCBIfam" id="NF003877">
    <property type="entry name" value="PRK05427.1"/>
    <property type="match status" value="1"/>
</dbReference>
<dbReference type="PANTHER" id="PTHR12112">
    <property type="entry name" value="BNIP - RELATED"/>
    <property type="match status" value="1"/>
</dbReference>
<dbReference type="PANTHER" id="PTHR12112:SF22">
    <property type="entry name" value="MANGANESE-DEPENDENT INORGANIC PYROPHOSPHATASE-RELATED"/>
    <property type="match status" value="1"/>
</dbReference>
<dbReference type="Pfam" id="PF01368">
    <property type="entry name" value="DHH"/>
    <property type="match status" value="1"/>
</dbReference>
<dbReference type="Pfam" id="PF02833">
    <property type="entry name" value="DHHA2"/>
    <property type="match status" value="1"/>
</dbReference>
<dbReference type="SMART" id="SM01131">
    <property type="entry name" value="DHHA2"/>
    <property type="match status" value="1"/>
</dbReference>
<dbReference type="SUPFAM" id="SSF64182">
    <property type="entry name" value="DHH phosphoesterases"/>
    <property type="match status" value="1"/>
</dbReference>
<accession>P37487</accession>
<evidence type="ECO:0000269" key="1">
    <source>
    </source>
</evidence>
<evidence type="ECO:0000305" key="2"/>
<evidence type="ECO:0007829" key="3">
    <source>
        <dbReference type="PDB" id="1WPN"/>
    </source>
</evidence>
<evidence type="ECO:0007829" key="4">
    <source>
        <dbReference type="PDB" id="2HAW"/>
    </source>
</evidence>
<sequence length="309" mass="33989">MEKILIFGHQNPDTDTICSAIAYADLKNKLGFNAEPVRLGQVNGETQYALDYFKQESPRLVETAANEVNGVILVDHNERQQSIKDIEEVQVLEVIDHHRIANFETAEPLYYRAEPVGCTATILNKMYKENNVKIEKEIAGLMLSAIISDSLLFKSPTCTDQDVAAAKELAEIAGVDAEEYGLNMLKAGADLSKKTVEELISLDAKEFTLGSKKVEIAQVNTVDIEDVKKRQAELEAVISKVVAEKNLDLFLLVITDILENDSLALAIGNEAAKVEKAFNVTLENNTALLKGVVSRKKQVVPVLTDAMAE</sequence>
<keyword id="KW-0002">3D-structure</keyword>
<keyword id="KW-0963">Cytoplasm</keyword>
<keyword id="KW-0903">Direct protein sequencing</keyword>
<keyword id="KW-0378">Hydrolase</keyword>
<keyword id="KW-0464">Manganese</keyword>
<keyword id="KW-0479">Metal-binding</keyword>
<keyword id="KW-1185">Reference proteome</keyword>
<feature type="chain" id="PRO_0000158568" description="Manganese-dependent inorganic pyrophosphatase">
    <location>
        <begin position="1"/>
        <end position="309"/>
    </location>
</feature>
<feature type="binding site">
    <location>
        <position position="9"/>
    </location>
    <ligand>
        <name>Mn(2+)</name>
        <dbReference type="ChEBI" id="CHEBI:29035"/>
        <label>1</label>
    </ligand>
</feature>
<feature type="binding site">
    <location>
        <position position="13"/>
    </location>
    <ligand>
        <name>Mn(2+)</name>
        <dbReference type="ChEBI" id="CHEBI:29035"/>
        <label>1</label>
    </ligand>
</feature>
<feature type="binding site">
    <location>
        <position position="15"/>
    </location>
    <ligand>
        <name>Mn(2+)</name>
        <dbReference type="ChEBI" id="CHEBI:29035"/>
        <label>2</label>
    </ligand>
</feature>
<feature type="binding site">
    <location>
        <position position="75"/>
    </location>
    <ligand>
        <name>Mn(2+)</name>
        <dbReference type="ChEBI" id="CHEBI:29035"/>
        <label>1</label>
    </ligand>
</feature>
<feature type="binding site">
    <location>
        <position position="75"/>
    </location>
    <ligand>
        <name>Mn(2+)</name>
        <dbReference type="ChEBI" id="CHEBI:29035"/>
        <label>2</label>
    </ligand>
</feature>
<feature type="binding site">
    <location>
        <position position="97"/>
    </location>
    <ligand>
        <name>Mn(2+)</name>
        <dbReference type="ChEBI" id="CHEBI:29035"/>
        <label>2</label>
    </ligand>
</feature>
<feature type="binding site">
    <location>
        <position position="149"/>
    </location>
    <ligand>
        <name>Mn(2+)</name>
        <dbReference type="ChEBI" id="CHEBI:29035"/>
        <label>2</label>
    </ligand>
</feature>
<feature type="strand" evidence="3">
    <location>
        <begin position="4"/>
        <end position="7"/>
    </location>
</feature>
<feature type="helix" evidence="3">
    <location>
        <begin position="14"/>
        <end position="29"/>
    </location>
</feature>
<feature type="strand" evidence="3">
    <location>
        <begin position="34"/>
        <end position="40"/>
    </location>
</feature>
<feature type="helix" evidence="3">
    <location>
        <begin position="44"/>
        <end position="52"/>
    </location>
</feature>
<feature type="turn" evidence="3">
    <location>
        <begin position="65"/>
        <end position="67"/>
    </location>
</feature>
<feature type="strand" evidence="3">
    <location>
        <begin position="69"/>
        <end position="75"/>
    </location>
</feature>
<feature type="helix" evidence="3">
    <location>
        <begin position="79"/>
        <end position="81"/>
    </location>
</feature>
<feature type="helix" evidence="3">
    <location>
        <begin position="86"/>
        <end position="88"/>
    </location>
</feature>
<feature type="strand" evidence="3">
    <location>
        <begin position="89"/>
        <end position="96"/>
    </location>
</feature>
<feature type="strand" evidence="3">
    <location>
        <begin position="110"/>
        <end position="113"/>
    </location>
</feature>
<feature type="strand" evidence="3">
    <location>
        <begin position="115"/>
        <end position="117"/>
    </location>
</feature>
<feature type="helix" evidence="3">
    <location>
        <begin position="119"/>
        <end position="129"/>
    </location>
</feature>
<feature type="helix" evidence="3">
    <location>
        <begin position="136"/>
        <end position="150"/>
    </location>
</feature>
<feature type="turn" evidence="3">
    <location>
        <begin position="151"/>
        <end position="154"/>
    </location>
</feature>
<feature type="helix" evidence="3">
    <location>
        <begin position="160"/>
        <end position="173"/>
    </location>
</feature>
<feature type="helix" evidence="3">
    <location>
        <begin position="177"/>
        <end position="187"/>
    </location>
</feature>
<feature type="helix" evidence="4">
    <location>
        <begin position="196"/>
        <end position="199"/>
    </location>
</feature>
<feature type="turn" evidence="4">
    <location>
        <begin position="200"/>
        <end position="203"/>
    </location>
</feature>
<feature type="strand" evidence="4">
    <location>
        <begin position="204"/>
        <end position="209"/>
    </location>
</feature>
<feature type="strand" evidence="4">
    <location>
        <begin position="212"/>
        <end position="222"/>
    </location>
</feature>
<feature type="helix" evidence="4">
    <location>
        <begin position="224"/>
        <end position="228"/>
    </location>
</feature>
<feature type="helix" evidence="4">
    <location>
        <begin position="231"/>
        <end position="244"/>
    </location>
</feature>
<feature type="strand" evidence="4">
    <location>
        <begin position="248"/>
        <end position="256"/>
    </location>
</feature>
<feature type="turn" evidence="4">
    <location>
        <begin position="257"/>
        <end position="260"/>
    </location>
</feature>
<feature type="strand" evidence="4">
    <location>
        <begin position="261"/>
        <end position="268"/>
    </location>
</feature>
<feature type="turn" evidence="4">
    <location>
        <begin position="269"/>
        <end position="271"/>
    </location>
</feature>
<feature type="helix" evidence="4">
    <location>
        <begin position="272"/>
        <end position="278"/>
    </location>
</feature>
<feature type="strand" evidence="4">
    <location>
        <begin position="286"/>
        <end position="290"/>
    </location>
</feature>
<feature type="helix" evidence="4">
    <location>
        <begin position="295"/>
        <end position="298"/>
    </location>
</feature>
<feature type="helix" evidence="4">
    <location>
        <begin position="300"/>
        <end position="307"/>
    </location>
</feature>
<reference key="1">
    <citation type="journal article" date="1994" name="DNA Res.">
        <title>Systematic sequencing of the 180 kilobase region of the Bacillus subtilis chromosome containing the replication origin.</title>
        <authorList>
            <person name="Ogasawara N."/>
            <person name="Nakai S."/>
            <person name="Yoshikawa H."/>
        </authorList>
    </citation>
    <scope>NUCLEOTIDE SEQUENCE [GENOMIC DNA]</scope>
    <source>
        <strain>168</strain>
    </source>
</reference>
<reference key="2">
    <citation type="journal article" date="1997" name="Nature">
        <title>The complete genome sequence of the Gram-positive bacterium Bacillus subtilis.</title>
        <authorList>
            <person name="Kunst F."/>
            <person name="Ogasawara N."/>
            <person name="Moszer I."/>
            <person name="Albertini A.M."/>
            <person name="Alloni G."/>
            <person name="Azevedo V."/>
            <person name="Bertero M.G."/>
            <person name="Bessieres P."/>
            <person name="Bolotin A."/>
            <person name="Borchert S."/>
            <person name="Borriss R."/>
            <person name="Boursier L."/>
            <person name="Brans A."/>
            <person name="Braun M."/>
            <person name="Brignell S.C."/>
            <person name="Bron S."/>
            <person name="Brouillet S."/>
            <person name="Bruschi C.V."/>
            <person name="Caldwell B."/>
            <person name="Capuano V."/>
            <person name="Carter N.M."/>
            <person name="Choi S.-K."/>
            <person name="Codani J.-J."/>
            <person name="Connerton I.F."/>
            <person name="Cummings N.J."/>
            <person name="Daniel R.A."/>
            <person name="Denizot F."/>
            <person name="Devine K.M."/>
            <person name="Duesterhoeft A."/>
            <person name="Ehrlich S.D."/>
            <person name="Emmerson P.T."/>
            <person name="Entian K.-D."/>
            <person name="Errington J."/>
            <person name="Fabret C."/>
            <person name="Ferrari E."/>
            <person name="Foulger D."/>
            <person name="Fritz C."/>
            <person name="Fujita M."/>
            <person name="Fujita Y."/>
            <person name="Fuma S."/>
            <person name="Galizzi A."/>
            <person name="Galleron N."/>
            <person name="Ghim S.-Y."/>
            <person name="Glaser P."/>
            <person name="Goffeau A."/>
            <person name="Golightly E.J."/>
            <person name="Grandi G."/>
            <person name="Guiseppi G."/>
            <person name="Guy B.J."/>
            <person name="Haga K."/>
            <person name="Haiech J."/>
            <person name="Harwood C.R."/>
            <person name="Henaut A."/>
            <person name="Hilbert H."/>
            <person name="Holsappel S."/>
            <person name="Hosono S."/>
            <person name="Hullo M.-F."/>
            <person name="Itaya M."/>
            <person name="Jones L.-M."/>
            <person name="Joris B."/>
            <person name="Karamata D."/>
            <person name="Kasahara Y."/>
            <person name="Klaerr-Blanchard M."/>
            <person name="Klein C."/>
            <person name="Kobayashi Y."/>
            <person name="Koetter P."/>
            <person name="Koningstein G."/>
            <person name="Krogh S."/>
            <person name="Kumano M."/>
            <person name="Kurita K."/>
            <person name="Lapidus A."/>
            <person name="Lardinois S."/>
            <person name="Lauber J."/>
            <person name="Lazarevic V."/>
            <person name="Lee S.-M."/>
            <person name="Levine A."/>
            <person name="Liu H."/>
            <person name="Masuda S."/>
            <person name="Mauel C."/>
            <person name="Medigue C."/>
            <person name="Medina N."/>
            <person name="Mellado R.P."/>
            <person name="Mizuno M."/>
            <person name="Moestl D."/>
            <person name="Nakai S."/>
            <person name="Noback M."/>
            <person name="Noone D."/>
            <person name="O'Reilly M."/>
            <person name="Ogawa K."/>
            <person name="Ogiwara A."/>
            <person name="Oudega B."/>
            <person name="Park S.-H."/>
            <person name="Parro V."/>
            <person name="Pohl T.M."/>
            <person name="Portetelle D."/>
            <person name="Porwollik S."/>
            <person name="Prescott A.M."/>
            <person name="Presecan E."/>
            <person name="Pujic P."/>
            <person name="Purnelle B."/>
            <person name="Rapoport G."/>
            <person name="Rey M."/>
            <person name="Reynolds S."/>
            <person name="Rieger M."/>
            <person name="Rivolta C."/>
            <person name="Rocha E."/>
            <person name="Roche B."/>
            <person name="Rose M."/>
            <person name="Sadaie Y."/>
            <person name="Sato T."/>
            <person name="Scanlan E."/>
            <person name="Schleich S."/>
            <person name="Schroeter R."/>
            <person name="Scoffone F."/>
            <person name="Sekiguchi J."/>
            <person name="Sekowska A."/>
            <person name="Seror S.J."/>
            <person name="Serror P."/>
            <person name="Shin B.-S."/>
            <person name="Soldo B."/>
            <person name="Sorokin A."/>
            <person name="Tacconi E."/>
            <person name="Takagi T."/>
            <person name="Takahashi H."/>
            <person name="Takemaru K."/>
            <person name="Takeuchi M."/>
            <person name="Tamakoshi A."/>
            <person name="Tanaka T."/>
            <person name="Terpstra P."/>
            <person name="Tognoni A."/>
            <person name="Tosato V."/>
            <person name="Uchiyama S."/>
            <person name="Vandenbol M."/>
            <person name="Vannier F."/>
            <person name="Vassarotti A."/>
            <person name="Viari A."/>
            <person name="Wambutt R."/>
            <person name="Wedler E."/>
            <person name="Wedler H."/>
            <person name="Weitzenegger T."/>
            <person name="Winters P."/>
            <person name="Wipat A."/>
            <person name="Yamamoto H."/>
            <person name="Yamane K."/>
            <person name="Yasumoto K."/>
            <person name="Yata K."/>
            <person name="Yoshida K."/>
            <person name="Yoshikawa H.-F."/>
            <person name="Zumstein E."/>
            <person name="Yoshikawa H."/>
            <person name="Danchin A."/>
        </authorList>
    </citation>
    <scope>NUCLEOTIDE SEQUENCE [LARGE SCALE GENOMIC DNA]</scope>
    <source>
        <strain>168</strain>
    </source>
</reference>
<reference key="3">
    <citation type="journal article" date="1998" name="Microbiology">
        <title>Bacillus subtilis ORF yybQ encodes a manganese-dependent inorganic pyrophosphatase with distinctive properties: the first of a new class of soluble pyrophosphatase?</title>
        <authorList>
            <person name="Young T.W."/>
            <person name="Kuhn N.J."/>
            <person name="Wadeson A."/>
            <person name="Ward S."/>
            <person name="Burges D."/>
            <person name="Cooke G.D."/>
        </authorList>
    </citation>
    <scope>PROTEIN SEQUENCE OF 1-15</scope>
    <scope>CHARACTERIZATION</scope>
    <scope>MASS SPECTROMETRY</scope>
    <source>
        <strain>WB600</strain>
    </source>
</reference>
<reference key="4">
    <citation type="journal article" date="1998" name="FEBS Lett.">
        <title>Cloning and expression of a unique inorganic pyrophosphatase from Bacillus subtilis: evidence for a new family of enzymes.</title>
        <authorList>
            <person name="Shintani T."/>
            <person name="Uchiumi T."/>
            <person name="Yonezawa T."/>
            <person name="Salminen A."/>
            <person name="Baykov A.A."/>
            <person name="Lahti R."/>
            <person name="Hachimori A."/>
        </authorList>
    </citation>
    <scope>CHARACTERIZATION</scope>
</reference>
<reference key="5">
    <citation type="journal article" date="2001" name="J. Mol. Biol.">
        <title>The 'open' and 'closed' structures of the type-C inorganic pyrophosphatases from Bacillus subtilis and Streptococcus gordonii.</title>
        <authorList>
            <person name="Ahn S."/>
            <person name="Milner A.J."/>
            <person name="Fuetterer K."/>
            <person name="Konopka M."/>
            <person name="Ilias M."/>
            <person name="Young T.W."/>
            <person name="White S.A."/>
        </authorList>
    </citation>
    <scope>X-RAY CRYSTALLOGRAPHY (3.0 ANGSTROMS)</scope>
</reference>
<gene>
    <name type="primary">ppaC</name>
    <name type="ordered locus">BSU40550</name>
</gene>
<protein>
    <recommendedName>
        <fullName>Manganese-dependent inorganic pyrophosphatase</fullName>
        <ecNumber>3.6.1.1</ecNumber>
    </recommendedName>
    <alternativeName>
        <fullName>Pyrophosphate phospho-hydrolase</fullName>
        <shortName>PPase</shortName>
    </alternativeName>
</protein>
<comment type="catalytic activity">
    <reaction>
        <text>diphosphate + H2O = 2 phosphate + H(+)</text>
        <dbReference type="Rhea" id="RHEA:24576"/>
        <dbReference type="ChEBI" id="CHEBI:15377"/>
        <dbReference type="ChEBI" id="CHEBI:15378"/>
        <dbReference type="ChEBI" id="CHEBI:33019"/>
        <dbReference type="ChEBI" id="CHEBI:43474"/>
        <dbReference type="EC" id="3.6.1.1"/>
    </reaction>
</comment>
<comment type="cofactor">
    <cofactor>
        <name>Mn(2+)</name>
        <dbReference type="ChEBI" id="CHEBI:29035"/>
    </cofactor>
    <text>Binds 2 manganese ions per subunit.</text>
</comment>
<comment type="subunit">
    <text>Homodimer.</text>
</comment>
<comment type="subcellular location">
    <subcellularLocation>
        <location>Cytoplasm</location>
    </subcellularLocation>
</comment>
<comment type="mass spectrometry" mass="34019.0" method="MALDI" evidence="1"/>
<comment type="similarity">
    <text evidence="2">Belongs to the PPase class C family.</text>
</comment>